<accession>B4TWP0</accession>
<name>ISPH_SALSV</name>
<proteinExistence type="inferred from homology"/>
<comment type="function">
    <text evidence="1">Catalyzes the conversion of 1-hydroxy-2-methyl-2-(E)-butenyl 4-diphosphate (HMBPP) into a mixture of isopentenyl diphosphate (IPP) and dimethylallyl diphosphate (DMAPP). Acts in the terminal step of the DOXP/MEP pathway for isoprenoid precursor biosynthesis.</text>
</comment>
<comment type="catalytic activity">
    <reaction evidence="1">
        <text>isopentenyl diphosphate + 2 oxidized [2Fe-2S]-[ferredoxin] + H2O = (2E)-4-hydroxy-3-methylbut-2-enyl diphosphate + 2 reduced [2Fe-2S]-[ferredoxin] + 2 H(+)</text>
        <dbReference type="Rhea" id="RHEA:24488"/>
        <dbReference type="Rhea" id="RHEA-COMP:10000"/>
        <dbReference type="Rhea" id="RHEA-COMP:10001"/>
        <dbReference type="ChEBI" id="CHEBI:15377"/>
        <dbReference type="ChEBI" id="CHEBI:15378"/>
        <dbReference type="ChEBI" id="CHEBI:33737"/>
        <dbReference type="ChEBI" id="CHEBI:33738"/>
        <dbReference type="ChEBI" id="CHEBI:128753"/>
        <dbReference type="ChEBI" id="CHEBI:128769"/>
        <dbReference type="EC" id="1.17.7.4"/>
    </reaction>
</comment>
<comment type="catalytic activity">
    <reaction evidence="1">
        <text>dimethylallyl diphosphate + 2 oxidized [2Fe-2S]-[ferredoxin] + H2O = (2E)-4-hydroxy-3-methylbut-2-enyl diphosphate + 2 reduced [2Fe-2S]-[ferredoxin] + 2 H(+)</text>
        <dbReference type="Rhea" id="RHEA:24825"/>
        <dbReference type="Rhea" id="RHEA-COMP:10000"/>
        <dbReference type="Rhea" id="RHEA-COMP:10001"/>
        <dbReference type="ChEBI" id="CHEBI:15377"/>
        <dbReference type="ChEBI" id="CHEBI:15378"/>
        <dbReference type="ChEBI" id="CHEBI:33737"/>
        <dbReference type="ChEBI" id="CHEBI:33738"/>
        <dbReference type="ChEBI" id="CHEBI:57623"/>
        <dbReference type="ChEBI" id="CHEBI:128753"/>
        <dbReference type="EC" id="1.17.7.4"/>
    </reaction>
</comment>
<comment type="cofactor">
    <cofactor evidence="1">
        <name>[4Fe-4S] cluster</name>
        <dbReference type="ChEBI" id="CHEBI:49883"/>
    </cofactor>
    <text evidence="1">Binds 1 [4Fe-4S] cluster per subunit.</text>
</comment>
<comment type="pathway">
    <text evidence="1">Isoprenoid biosynthesis; dimethylallyl diphosphate biosynthesis; dimethylallyl diphosphate from (2E)-4-hydroxy-3-methylbutenyl diphosphate: step 1/1.</text>
</comment>
<comment type="pathway">
    <text evidence="1">Isoprenoid biosynthesis; isopentenyl diphosphate biosynthesis via DXP pathway; isopentenyl diphosphate from 1-deoxy-D-xylulose 5-phosphate: step 6/6.</text>
</comment>
<comment type="subunit">
    <text evidence="1">Homodimer.</text>
</comment>
<comment type="similarity">
    <text evidence="1">Belongs to the IspH family.</text>
</comment>
<organism>
    <name type="scientific">Salmonella schwarzengrund (strain CVM19633)</name>
    <dbReference type="NCBI Taxonomy" id="439843"/>
    <lineage>
        <taxon>Bacteria</taxon>
        <taxon>Pseudomonadati</taxon>
        <taxon>Pseudomonadota</taxon>
        <taxon>Gammaproteobacteria</taxon>
        <taxon>Enterobacterales</taxon>
        <taxon>Enterobacteriaceae</taxon>
        <taxon>Salmonella</taxon>
    </lineage>
</organism>
<dbReference type="EC" id="1.17.7.4" evidence="1"/>
<dbReference type="EMBL" id="CP001127">
    <property type="protein sequence ID" value="ACF90069.1"/>
    <property type="molecule type" value="Genomic_DNA"/>
</dbReference>
<dbReference type="RefSeq" id="WP_001166423.1">
    <property type="nucleotide sequence ID" value="NC_011094.1"/>
</dbReference>
<dbReference type="SMR" id="B4TWP0"/>
<dbReference type="KEGG" id="sew:SeSA_A0054"/>
<dbReference type="HOGENOM" id="CLU_027486_1_0_6"/>
<dbReference type="UniPathway" id="UPA00056">
    <property type="reaction ID" value="UER00097"/>
</dbReference>
<dbReference type="UniPathway" id="UPA00059">
    <property type="reaction ID" value="UER00105"/>
</dbReference>
<dbReference type="Proteomes" id="UP000001865">
    <property type="component" value="Chromosome"/>
</dbReference>
<dbReference type="GO" id="GO:0051539">
    <property type="term" value="F:4 iron, 4 sulfur cluster binding"/>
    <property type="evidence" value="ECO:0007669"/>
    <property type="project" value="UniProtKB-UniRule"/>
</dbReference>
<dbReference type="GO" id="GO:0051745">
    <property type="term" value="F:4-hydroxy-3-methylbut-2-enyl diphosphate reductase activity"/>
    <property type="evidence" value="ECO:0007669"/>
    <property type="project" value="UniProtKB-UniRule"/>
</dbReference>
<dbReference type="GO" id="GO:0046872">
    <property type="term" value="F:metal ion binding"/>
    <property type="evidence" value="ECO:0007669"/>
    <property type="project" value="UniProtKB-KW"/>
</dbReference>
<dbReference type="GO" id="GO:0050992">
    <property type="term" value="P:dimethylallyl diphosphate biosynthetic process"/>
    <property type="evidence" value="ECO:0007669"/>
    <property type="project" value="UniProtKB-UniRule"/>
</dbReference>
<dbReference type="GO" id="GO:0019288">
    <property type="term" value="P:isopentenyl diphosphate biosynthetic process, methylerythritol 4-phosphate pathway"/>
    <property type="evidence" value="ECO:0007669"/>
    <property type="project" value="UniProtKB-UniRule"/>
</dbReference>
<dbReference type="GO" id="GO:0016114">
    <property type="term" value="P:terpenoid biosynthetic process"/>
    <property type="evidence" value="ECO:0007669"/>
    <property type="project" value="UniProtKB-UniRule"/>
</dbReference>
<dbReference type="CDD" id="cd13944">
    <property type="entry name" value="lytB_ispH"/>
    <property type="match status" value="1"/>
</dbReference>
<dbReference type="FunFam" id="3.40.1010.20:FF:000001">
    <property type="entry name" value="4-hydroxy-3-methylbut-2-enyl diphosphate reductase"/>
    <property type="match status" value="1"/>
</dbReference>
<dbReference type="FunFam" id="3.40.50.11270:FF:000001">
    <property type="entry name" value="4-hydroxy-3-methylbut-2-enyl diphosphate reductase"/>
    <property type="match status" value="1"/>
</dbReference>
<dbReference type="Gene3D" id="3.40.50.11270">
    <property type="match status" value="1"/>
</dbReference>
<dbReference type="Gene3D" id="3.40.1010.20">
    <property type="entry name" value="4-hydroxy-3-methylbut-2-enyl diphosphate reductase, catalytic domain"/>
    <property type="match status" value="2"/>
</dbReference>
<dbReference type="HAMAP" id="MF_00191">
    <property type="entry name" value="IspH"/>
    <property type="match status" value="1"/>
</dbReference>
<dbReference type="InterPro" id="IPR003451">
    <property type="entry name" value="LytB/IspH"/>
</dbReference>
<dbReference type="NCBIfam" id="TIGR00216">
    <property type="entry name" value="ispH_lytB"/>
    <property type="match status" value="1"/>
</dbReference>
<dbReference type="NCBIfam" id="NF002188">
    <property type="entry name" value="PRK01045.1-2"/>
    <property type="match status" value="1"/>
</dbReference>
<dbReference type="NCBIfam" id="NF002190">
    <property type="entry name" value="PRK01045.1-4"/>
    <property type="match status" value="1"/>
</dbReference>
<dbReference type="PANTHER" id="PTHR30426">
    <property type="entry name" value="4-HYDROXY-3-METHYLBUT-2-ENYL DIPHOSPHATE REDUCTASE"/>
    <property type="match status" value="1"/>
</dbReference>
<dbReference type="PANTHER" id="PTHR30426:SF0">
    <property type="entry name" value="4-HYDROXY-3-METHYLBUT-2-ENYL DIPHOSPHATE REDUCTASE"/>
    <property type="match status" value="1"/>
</dbReference>
<dbReference type="Pfam" id="PF02401">
    <property type="entry name" value="LYTB"/>
    <property type="match status" value="1"/>
</dbReference>
<protein>
    <recommendedName>
        <fullName evidence="1">4-hydroxy-3-methylbut-2-enyl diphosphate reductase</fullName>
        <shortName evidence="1">HMBPP reductase</shortName>
        <ecNumber evidence="1">1.17.7.4</ecNumber>
    </recommendedName>
</protein>
<sequence>MQILLANPRGFCAGVDRAISIVENALAIYGAPIYVRHEVVHNRYVVDSLRKRGAIFIEQISEVPDGAILIFSAHGVSQAVRNEAKSRDLTVFDATCPLVTKVHMEVARASRRGEESILIGHAGHPEVEGTMGQYSNPEGGMYLVESPEDVWTLNVKNEGKLSFMTQTTLSVDDTSDVIDALRKRFPKIVGPRKDDICYATTNRQEAVRALAEQADVVLVVGSKNSSNSNRLAELAQRMGRTAFLIDDATDIQEAWVKDAACVGVTAGASAPDILVQNVIARLREFGGGEAVTLEGREENIVFEVPKELRVDVREVE</sequence>
<gene>
    <name evidence="1" type="primary">ispH</name>
    <name type="ordered locus">SeSA_A0054</name>
</gene>
<feature type="chain" id="PRO_1000098976" description="4-hydroxy-3-methylbut-2-enyl diphosphate reductase">
    <location>
        <begin position="1"/>
        <end position="316"/>
    </location>
</feature>
<feature type="active site" description="Proton donor" evidence="1">
    <location>
        <position position="126"/>
    </location>
</feature>
<feature type="binding site" evidence="1">
    <location>
        <position position="12"/>
    </location>
    <ligand>
        <name>[4Fe-4S] cluster</name>
        <dbReference type="ChEBI" id="CHEBI:49883"/>
    </ligand>
</feature>
<feature type="binding site" evidence="1">
    <location>
        <position position="41"/>
    </location>
    <ligand>
        <name>(2E)-4-hydroxy-3-methylbut-2-enyl diphosphate</name>
        <dbReference type="ChEBI" id="CHEBI:128753"/>
    </ligand>
</feature>
<feature type="binding site" evidence="1">
    <location>
        <position position="41"/>
    </location>
    <ligand>
        <name>dimethylallyl diphosphate</name>
        <dbReference type="ChEBI" id="CHEBI:57623"/>
    </ligand>
</feature>
<feature type="binding site" evidence="1">
    <location>
        <position position="41"/>
    </location>
    <ligand>
        <name>isopentenyl diphosphate</name>
        <dbReference type="ChEBI" id="CHEBI:128769"/>
    </ligand>
</feature>
<feature type="binding site" evidence="1">
    <location>
        <position position="74"/>
    </location>
    <ligand>
        <name>(2E)-4-hydroxy-3-methylbut-2-enyl diphosphate</name>
        <dbReference type="ChEBI" id="CHEBI:128753"/>
    </ligand>
</feature>
<feature type="binding site" evidence="1">
    <location>
        <position position="74"/>
    </location>
    <ligand>
        <name>dimethylallyl diphosphate</name>
        <dbReference type="ChEBI" id="CHEBI:57623"/>
    </ligand>
</feature>
<feature type="binding site" evidence="1">
    <location>
        <position position="74"/>
    </location>
    <ligand>
        <name>isopentenyl diphosphate</name>
        <dbReference type="ChEBI" id="CHEBI:128769"/>
    </ligand>
</feature>
<feature type="binding site" evidence="1">
    <location>
        <position position="96"/>
    </location>
    <ligand>
        <name>[4Fe-4S] cluster</name>
        <dbReference type="ChEBI" id="CHEBI:49883"/>
    </ligand>
</feature>
<feature type="binding site" evidence="1">
    <location>
        <position position="124"/>
    </location>
    <ligand>
        <name>(2E)-4-hydroxy-3-methylbut-2-enyl diphosphate</name>
        <dbReference type="ChEBI" id="CHEBI:128753"/>
    </ligand>
</feature>
<feature type="binding site" evidence="1">
    <location>
        <position position="124"/>
    </location>
    <ligand>
        <name>dimethylallyl diphosphate</name>
        <dbReference type="ChEBI" id="CHEBI:57623"/>
    </ligand>
</feature>
<feature type="binding site" evidence="1">
    <location>
        <position position="124"/>
    </location>
    <ligand>
        <name>isopentenyl diphosphate</name>
        <dbReference type="ChEBI" id="CHEBI:128769"/>
    </ligand>
</feature>
<feature type="binding site" evidence="1">
    <location>
        <position position="167"/>
    </location>
    <ligand>
        <name>(2E)-4-hydroxy-3-methylbut-2-enyl diphosphate</name>
        <dbReference type="ChEBI" id="CHEBI:128753"/>
    </ligand>
</feature>
<feature type="binding site" evidence="1">
    <location>
        <position position="197"/>
    </location>
    <ligand>
        <name>[4Fe-4S] cluster</name>
        <dbReference type="ChEBI" id="CHEBI:49883"/>
    </ligand>
</feature>
<feature type="binding site" evidence="1">
    <location>
        <position position="225"/>
    </location>
    <ligand>
        <name>(2E)-4-hydroxy-3-methylbut-2-enyl diphosphate</name>
        <dbReference type="ChEBI" id="CHEBI:128753"/>
    </ligand>
</feature>
<feature type="binding site" evidence="1">
    <location>
        <position position="225"/>
    </location>
    <ligand>
        <name>dimethylallyl diphosphate</name>
        <dbReference type="ChEBI" id="CHEBI:57623"/>
    </ligand>
</feature>
<feature type="binding site" evidence="1">
    <location>
        <position position="225"/>
    </location>
    <ligand>
        <name>isopentenyl diphosphate</name>
        <dbReference type="ChEBI" id="CHEBI:128769"/>
    </ligand>
</feature>
<feature type="binding site" evidence="1">
    <location>
        <position position="226"/>
    </location>
    <ligand>
        <name>(2E)-4-hydroxy-3-methylbut-2-enyl diphosphate</name>
        <dbReference type="ChEBI" id="CHEBI:128753"/>
    </ligand>
</feature>
<feature type="binding site" evidence="1">
    <location>
        <position position="226"/>
    </location>
    <ligand>
        <name>dimethylallyl diphosphate</name>
        <dbReference type="ChEBI" id="CHEBI:57623"/>
    </ligand>
</feature>
<feature type="binding site" evidence="1">
    <location>
        <position position="226"/>
    </location>
    <ligand>
        <name>isopentenyl diphosphate</name>
        <dbReference type="ChEBI" id="CHEBI:128769"/>
    </ligand>
</feature>
<feature type="binding site" evidence="1">
    <location>
        <position position="227"/>
    </location>
    <ligand>
        <name>(2E)-4-hydroxy-3-methylbut-2-enyl diphosphate</name>
        <dbReference type="ChEBI" id="CHEBI:128753"/>
    </ligand>
</feature>
<feature type="binding site" evidence="1">
    <location>
        <position position="227"/>
    </location>
    <ligand>
        <name>dimethylallyl diphosphate</name>
        <dbReference type="ChEBI" id="CHEBI:57623"/>
    </ligand>
</feature>
<feature type="binding site" evidence="1">
    <location>
        <position position="227"/>
    </location>
    <ligand>
        <name>isopentenyl diphosphate</name>
        <dbReference type="ChEBI" id="CHEBI:128769"/>
    </ligand>
</feature>
<feature type="binding site" evidence="1">
    <location>
        <position position="269"/>
    </location>
    <ligand>
        <name>(2E)-4-hydroxy-3-methylbut-2-enyl diphosphate</name>
        <dbReference type="ChEBI" id="CHEBI:128753"/>
    </ligand>
</feature>
<feature type="binding site" evidence="1">
    <location>
        <position position="269"/>
    </location>
    <ligand>
        <name>dimethylallyl diphosphate</name>
        <dbReference type="ChEBI" id="CHEBI:57623"/>
    </ligand>
</feature>
<feature type="binding site" evidence="1">
    <location>
        <position position="269"/>
    </location>
    <ligand>
        <name>isopentenyl diphosphate</name>
        <dbReference type="ChEBI" id="CHEBI:128769"/>
    </ligand>
</feature>
<keyword id="KW-0004">4Fe-4S</keyword>
<keyword id="KW-0408">Iron</keyword>
<keyword id="KW-0411">Iron-sulfur</keyword>
<keyword id="KW-0414">Isoprene biosynthesis</keyword>
<keyword id="KW-0479">Metal-binding</keyword>
<keyword id="KW-0560">Oxidoreductase</keyword>
<evidence type="ECO:0000255" key="1">
    <source>
        <dbReference type="HAMAP-Rule" id="MF_00191"/>
    </source>
</evidence>
<reference key="1">
    <citation type="journal article" date="2011" name="J. Bacteriol.">
        <title>Comparative genomics of 28 Salmonella enterica isolates: evidence for CRISPR-mediated adaptive sublineage evolution.</title>
        <authorList>
            <person name="Fricke W.F."/>
            <person name="Mammel M.K."/>
            <person name="McDermott P.F."/>
            <person name="Tartera C."/>
            <person name="White D.G."/>
            <person name="Leclerc J.E."/>
            <person name="Ravel J."/>
            <person name="Cebula T.A."/>
        </authorList>
    </citation>
    <scope>NUCLEOTIDE SEQUENCE [LARGE SCALE GENOMIC DNA]</scope>
    <source>
        <strain>CVM19633</strain>
    </source>
</reference>